<protein>
    <recommendedName>
        <fullName evidence="1">Aspartyl/glutamyl-tRNA(Asn/Gln) amidotransferase subunit B</fullName>
        <shortName evidence="1">Asp/Glu-ADT subunit B</shortName>
        <ecNumber evidence="1">6.3.5.-</ecNumber>
    </recommendedName>
</protein>
<evidence type="ECO:0000255" key="1">
    <source>
        <dbReference type="HAMAP-Rule" id="MF_00121"/>
    </source>
</evidence>
<reference key="1">
    <citation type="journal article" date="2004" name="Proc. Natl. Acad. Sci. U.S.A.">
        <title>The genome sequence of the probiotic intestinal bacterium Lactobacillus johnsonii NCC 533.</title>
        <authorList>
            <person name="Pridmore R.D."/>
            <person name="Berger B."/>
            <person name="Desiere F."/>
            <person name="Vilanova D."/>
            <person name="Barretto C."/>
            <person name="Pittet A.-C."/>
            <person name="Zwahlen M.-C."/>
            <person name="Rouvet M."/>
            <person name="Altermann E."/>
            <person name="Barrangou R."/>
            <person name="Mollet B."/>
            <person name="Mercenier A."/>
            <person name="Klaenhammer T."/>
            <person name="Arigoni F."/>
            <person name="Schell M.A."/>
        </authorList>
    </citation>
    <scope>NUCLEOTIDE SEQUENCE [LARGE SCALE GENOMIC DNA]</scope>
    <source>
        <strain>CNCM I-1225 / La1 / NCC 533</strain>
    </source>
</reference>
<name>GATB_LACJO</name>
<comment type="function">
    <text evidence="1">Allows the formation of correctly charged Asn-tRNA(Asn) or Gln-tRNA(Gln) through the transamidation of misacylated Asp-tRNA(Asn) or Glu-tRNA(Gln) in organisms which lack either or both of asparaginyl-tRNA or glutaminyl-tRNA synthetases. The reaction takes place in the presence of glutamine and ATP through an activated phospho-Asp-tRNA(Asn) or phospho-Glu-tRNA(Gln).</text>
</comment>
<comment type="catalytic activity">
    <reaction evidence="1">
        <text>L-glutamyl-tRNA(Gln) + L-glutamine + ATP + H2O = L-glutaminyl-tRNA(Gln) + L-glutamate + ADP + phosphate + H(+)</text>
        <dbReference type="Rhea" id="RHEA:17521"/>
        <dbReference type="Rhea" id="RHEA-COMP:9681"/>
        <dbReference type="Rhea" id="RHEA-COMP:9684"/>
        <dbReference type="ChEBI" id="CHEBI:15377"/>
        <dbReference type="ChEBI" id="CHEBI:15378"/>
        <dbReference type="ChEBI" id="CHEBI:29985"/>
        <dbReference type="ChEBI" id="CHEBI:30616"/>
        <dbReference type="ChEBI" id="CHEBI:43474"/>
        <dbReference type="ChEBI" id="CHEBI:58359"/>
        <dbReference type="ChEBI" id="CHEBI:78520"/>
        <dbReference type="ChEBI" id="CHEBI:78521"/>
        <dbReference type="ChEBI" id="CHEBI:456216"/>
    </reaction>
</comment>
<comment type="catalytic activity">
    <reaction evidence="1">
        <text>L-aspartyl-tRNA(Asn) + L-glutamine + ATP + H2O = L-asparaginyl-tRNA(Asn) + L-glutamate + ADP + phosphate + 2 H(+)</text>
        <dbReference type="Rhea" id="RHEA:14513"/>
        <dbReference type="Rhea" id="RHEA-COMP:9674"/>
        <dbReference type="Rhea" id="RHEA-COMP:9677"/>
        <dbReference type="ChEBI" id="CHEBI:15377"/>
        <dbReference type="ChEBI" id="CHEBI:15378"/>
        <dbReference type="ChEBI" id="CHEBI:29985"/>
        <dbReference type="ChEBI" id="CHEBI:30616"/>
        <dbReference type="ChEBI" id="CHEBI:43474"/>
        <dbReference type="ChEBI" id="CHEBI:58359"/>
        <dbReference type="ChEBI" id="CHEBI:78515"/>
        <dbReference type="ChEBI" id="CHEBI:78516"/>
        <dbReference type="ChEBI" id="CHEBI:456216"/>
    </reaction>
</comment>
<comment type="subunit">
    <text evidence="1">Heterotrimer of A, B and C subunits.</text>
</comment>
<comment type="similarity">
    <text evidence="1">Belongs to the GatB/GatE family. GatB subfamily.</text>
</comment>
<keyword id="KW-0067">ATP-binding</keyword>
<keyword id="KW-0436">Ligase</keyword>
<keyword id="KW-0547">Nucleotide-binding</keyword>
<keyword id="KW-0648">Protein biosynthesis</keyword>
<gene>
    <name evidence="1" type="primary">gatB</name>
    <name type="ordered locus">LJ_1716</name>
</gene>
<organism>
    <name type="scientific">Lactobacillus johnsonii (strain CNCM I-12250 / La1 / NCC 533)</name>
    <dbReference type="NCBI Taxonomy" id="257314"/>
    <lineage>
        <taxon>Bacteria</taxon>
        <taxon>Bacillati</taxon>
        <taxon>Bacillota</taxon>
        <taxon>Bacilli</taxon>
        <taxon>Lactobacillales</taxon>
        <taxon>Lactobacillaceae</taxon>
        <taxon>Lactobacillus</taxon>
    </lineage>
</organism>
<feature type="chain" id="PRO_0000148796" description="Aspartyl/glutamyl-tRNA(Asn/Gln) amidotransferase subunit B">
    <location>
        <begin position="1"/>
        <end position="476"/>
    </location>
</feature>
<dbReference type="EC" id="6.3.5.-" evidence="1"/>
<dbReference type="EMBL" id="AE017198">
    <property type="protein sequence ID" value="AAS09487.1"/>
    <property type="molecule type" value="Genomic_DNA"/>
</dbReference>
<dbReference type="RefSeq" id="WP_004893490.1">
    <property type="nucleotide sequence ID" value="NC_005362.1"/>
</dbReference>
<dbReference type="SMR" id="P61344"/>
<dbReference type="GeneID" id="83570908"/>
<dbReference type="KEGG" id="ljo:LJ_1716"/>
<dbReference type="eggNOG" id="COG0064">
    <property type="taxonomic scope" value="Bacteria"/>
</dbReference>
<dbReference type="HOGENOM" id="CLU_019240_0_0_9"/>
<dbReference type="Proteomes" id="UP000000581">
    <property type="component" value="Chromosome"/>
</dbReference>
<dbReference type="GO" id="GO:0050566">
    <property type="term" value="F:asparaginyl-tRNA synthase (glutamine-hydrolyzing) activity"/>
    <property type="evidence" value="ECO:0007669"/>
    <property type="project" value="RHEA"/>
</dbReference>
<dbReference type="GO" id="GO:0005524">
    <property type="term" value="F:ATP binding"/>
    <property type="evidence" value="ECO:0007669"/>
    <property type="project" value="UniProtKB-KW"/>
</dbReference>
<dbReference type="GO" id="GO:0050567">
    <property type="term" value="F:glutaminyl-tRNA synthase (glutamine-hydrolyzing) activity"/>
    <property type="evidence" value="ECO:0007669"/>
    <property type="project" value="UniProtKB-UniRule"/>
</dbReference>
<dbReference type="GO" id="GO:0070681">
    <property type="term" value="P:glutaminyl-tRNAGln biosynthesis via transamidation"/>
    <property type="evidence" value="ECO:0007669"/>
    <property type="project" value="TreeGrafter"/>
</dbReference>
<dbReference type="GO" id="GO:0006412">
    <property type="term" value="P:translation"/>
    <property type="evidence" value="ECO:0007669"/>
    <property type="project" value="UniProtKB-UniRule"/>
</dbReference>
<dbReference type="FunFam" id="1.10.10.410:FF:000001">
    <property type="entry name" value="Aspartyl/glutamyl-tRNA(Asn/Gln) amidotransferase subunit B"/>
    <property type="match status" value="1"/>
</dbReference>
<dbReference type="Gene3D" id="1.10.10.410">
    <property type="match status" value="1"/>
</dbReference>
<dbReference type="Gene3D" id="1.10.150.380">
    <property type="entry name" value="GatB domain, N-terminal subdomain"/>
    <property type="match status" value="1"/>
</dbReference>
<dbReference type="HAMAP" id="MF_00121">
    <property type="entry name" value="GatB"/>
    <property type="match status" value="1"/>
</dbReference>
<dbReference type="InterPro" id="IPR017959">
    <property type="entry name" value="Asn/Gln-tRNA_amidoTrfase_suB/E"/>
</dbReference>
<dbReference type="InterPro" id="IPR006075">
    <property type="entry name" value="Asn/Gln-tRNA_Trfase_suB/E_cat"/>
</dbReference>
<dbReference type="InterPro" id="IPR018027">
    <property type="entry name" value="Asn/Gln_amidotransferase"/>
</dbReference>
<dbReference type="InterPro" id="IPR003789">
    <property type="entry name" value="Asn/Gln_tRNA_amidoTrase-B-like"/>
</dbReference>
<dbReference type="InterPro" id="IPR004413">
    <property type="entry name" value="GatB"/>
</dbReference>
<dbReference type="InterPro" id="IPR042114">
    <property type="entry name" value="GatB_C_1"/>
</dbReference>
<dbReference type="InterPro" id="IPR023168">
    <property type="entry name" value="GatB_Yqey_C_2"/>
</dbReference>
<dbReference type="InterPro" id="IPR017958">
    <property type="entry name" value="Gln-tRNA_amidoTrfase_suB_CS"/>
</dbReference>
<dbReference type="InterPro" id="IPR014746">
    <property type="entry name" value="Gln_synth/guanido_kin_cat_dom"/>
</dbReference>
<dbReference type="NCBIfam" id="TIGR00133">
    <property type="entry name" value="gatB"/>
    <property type="match status" value="1"/>
</dbReference>
<dbReference type="NCBIfam" id="NF004011">
    <property type="entry name" value="PRK05477.1-1"/>
    <property type="match status" value="1"/>
</dbReference>
<dbReference type="NCBIfam" id="NF004012">
    <property type="entry name" value="PRK05477.1-2"/>
    <property type="match status" value="1"/>
</dbReference>
<dbReference type="NCBIfam" id="NF004014">
    <property type="entry name" value="PRK05477.1-4"/>
    <property type="match status" value="1"/>
</dbReference>
<dbReference type="PANTHER" id="PTHR11659">
    <property type="entry name" value="GLUTAMYL-TRNA GLN AMIDOTRANSFERASE SUBUNIT B MITOCHONDRIAL AND PROKARYOTIC PET112-RELATED"/>
    <property type="match status" value="1"/>
</dbReference>
<dbReference type="PANTHER" id="PTHR11659:SF0">
    <property type="entry name" value="GLUTAMYL-TRNA(GLN) AMIDOTRANSFERASE SUBUNIT B, MITOCHONDRIAL"/>
    <property type="match status" value="1"/>
</dbReference>
<dbReference type="Pfam" id="PF02934">
    <property type="entry name" value="GatB_N"/>
    <property type="match status" value="1"/>
</dbReference>
<dbReference type="Pfam" id="PF02637">
    <property type="entry name" value="GatB_Yqey"/>
    <property type="match status" value="1"/>
</dbReference>
<dbReference type="SMART" id="SM00845">
    <property type="entry name" value="GatB_Yqey"/>
    <property type="match status" value="1"/>
</dbReference>
<dbReference type="SUPFAM" id="SSF89095">
    <property type="entry name" value="GatB/YqeY motif"/>
    <property type="match status" value="1"/>
</dbReference>
<dbReference type="SUPFAM" id="SSF55931">
    <property type="entry name" value="Glutamine synthetase/guanido kinase"/>
    <property type="match status" value="1"/>
</dbReference>
<dbReference type="PROSITE" id="PS01234">
    <property type="entry name" value="GATB"/>
    <property type="match status" value="1"/>
</dbReference>
<accession>P61344</accession>
<proteinExistence type="inferred from homology"/>
<sequence length="476" mass="53904">MNFKSTIGLEVHFELKTKSKIFSPSPVSYGAEANTETNVIDWAMPGVLPRLNKDVYRLGIMVALATHSHVLPVTHFDRKNYFYPDNPKAYQITQFFQPLARDGYIEIEVRGKKKRIGIHEMHIEEDAGKNTHGANGYSYVDLNRQGVPLLEVVSEPDMEDPEEAYAYLTKLRQIVQFTGASDVKMEEGSMRVDTNISIRPAGQEKLGTKVEMKNLNSFDHVRRSLAYEEKRQQQVLLSGGRVQLSTRRFDEATGKTVLERVKEGDADYRYFPEPDIAPYHIKQSWIDEIEESLPESPFERRKRYVEEYGIKEYDADVILQTKESSDFYDAAVAAGADPTLAANWLNTQVNGYLNENQVGIADIKLTPEHLAEMIKMIKDGTISSKIAKKVFKESIENGTDPKKYVEDKGMVQLSDVSVLGPMVTKVVDDNPQSVEDFKNGKDRAIGFLVGQIMKQTRGKANPKVVNQLLNKELQSR</sequence>